<organism>
    <name type="scientific">Aspergillus niger</name>
    <dbReference type="NCBI Taxonomy" id="5061"/>
    <lineage>
        <taxon>Eukaryota</taxon>
        <taxon>Fungi</taxon>
        <taxon>Dikarya</taxon>
        <taxon>Ascomycota</taxon>
        <taxon>Pezizomycotina</taxon>
        <taxon>Eurotiomycetes</taxon>
        <taxon>Eurotiomycetidae</taxon>
        <taxon>Eurotiales</taxon>
        <taxon>Aspergillaceae</taxon>
        <taxon>Aspergillus</taxon>
        <taxon>Aspergillus subgen. Circumdati</taxon>
    </lineage>
</organism>
<evidence type="ECO:0000250" key="1"/>
<evidence type="ECO:0000255" key="2"/>
<evidence type="ECO:0000256" key="3">
    <source>
        <dbReference type="SAM" id="MobiDB-lite"/>
    </source>
</evidence>
<evidence type="ECO:0000269" key="4">
    <source>
    </source>
</evidence>
<evidence type="ECO:0000305" key="5"/>
<feature type="chain" id="PRO_0000412137" description="Dipeptidyl-aminopeptidase B">
    <location>
        <begin position="1"/>
        <end position="901"/>
    </location>
</feature>
<feature type="topological domain" description="Cytoplasmic" evidence="2">
    <location>
        <begin position="1"/>
        <end position="76"/>
    </location>
</feature>
<feature type="transmembrane region" description="Helical; Signal-anchor for type II membrane protein" evidence="2">
    <location>
        <begin position="77"/>
        <end position="97"/>
    </location>
</feature>
<feature type="topological domain" description="Vacuolar" evidence="2">
    <location>
        <begin position="98"/>
        <end position="901"/>
    </location>
</feature>
<feature type="region of interest" description="Disordered" evidence="3">
    <location>
        <begin position="1"/>
        <end position="67"/>
    </location>
</feature>
<feature type="compositionally biased region" description="Low complexity" evidence="3">
    <location>
        <begin position="1"/>
        <end position="22"/>
    </location>
</feature>
<feature type="active site" description="Charge relay system" evidence="1">
    <location>
        <position position="739"/>
    </location>
</feature>
<feature type="active site" description="Charge relay system" evidence="1">
    <location>
        <position position="816"/>
    </location>
</feature>
<feature type="active site" description="Charge relay system" evidence="1">
    <location>
        <position position="849"/>
    </location>
</feature>
<feature type="glycosylation site" description="N-linked (GlcNAc...) asparagine" evidence="2">
    <location>
        <position position="334"/>
    </location>
</feature>
<feature type="glycosylation site" description="N-linked (GlcNAc...) asparagine" evidence="2">
    <location>
        <position position="625"/>
    </location>
</feature>
<feature type="glycosylation site" description="N-linked (GlcNAc...) asparagine" evidence="2">
    <location>
        <position position="793"/>
    </location>
</feature>
<sequence length="901" mass="101256">MSSPRPSTSSTSSDSGLSVDTTAYPEESKYTSTAPGAGGLSDENRYRDVEEGEAGADEPFLPSAKKQAASGSRTSRLIWGLVILCVAGWLWGLVLFVTQNRSAQQSVSEALQSHESGAISGSSSSGKPVTLEQVLTGQWLPRSHAVSWIAGPNGEDGLLVEQGEDQGKGYLRVDDIRSRKGDATSQESRVLMEKAIVQVDGRTIFPVSTWPSPNLNKVLLLSEREKNWRHSFTGKYWIFDVATQTAQPLDPSNPDGRVQLAIWSPTSDMVAFVRDNNLYLRRLSSKEVVPITKDGGADLFYGIPDWVYEEEVFSGNSVTWWSGDGKYVAFLRTNETAVPEFPVQYYLSRPSGKRPPPGLEDYPEVREIKYPKAGAPNPVVSLQFYDVEKQEVFSIEAPDDFEDDDRIVIEIVWGTEGKILVRATNRESDVLKVFLFDTKARTSKLVRTENVADIDGGWVEPTQYTWFIPADPSNGRPHDGYLDTVIHEGYEHLGYFTPLDNSEPILLTQGEWEVVDAPTAVDLRKGIVYFISTKESPTERHLYQVNLDGSNLKPLTDTSKPGYYDVSFSHGTGYALLSYRGPSIPWQAIVNTETDELKYEETIEDNAGLARMVDSYALPTEIYQNVTIDGFTLQVVERRPPHFNPAKKYPVLFYLYNGPRSQTVDRKFSIDFQSYVASSLGYIVVTVDGRGTGFSGRKTRCIVRGNLGYYEAYDQITTANLWGEKPYVDETRMSIWGWSYGGFMTLKTLEQDAGQTFQYGMAVAPVTDWRHYDSIYTERYMHTPAHNPNGYDNTSITDMTALQQTVRFLVIHGASDDNVHIQNTLVLVDKLDLAGVQNYDLHFYPDSDHSINFHNAHRMVYERLSSWLVNAFNDEWHRIADPVPDDSMWEKVKRSLPMLVN</sequence>
<comment type="function">
    <text evidence="4">Type IV dipeptidyl-peptidase which removes N-terminal dipeptides sequentially from polypeptides having unsubstituted N-termini provided that the penultimate residue is proline.</text>
</comment>
<comment type="catalytic activity">
    <reaction>
        <text>Release of an N-terminal dipeptide, Xaa-Yaa-|-Zaa-, from a polypeptide, preferentially when Yaa is Pro, provided Zaa is neither Pro nor hydroxyproline.</text>
        <dbReference type="EC" id="3.4.14.5"/>
    </reaction>
</comment>
<comment type="subcellular location">
    <subcellularLocation>
        <location evidence="1">Vacuole membrane</location>
        <topology evidence="1">Single-pass type II membrane protein</topology>
    </subcellularLocation>
    <text evidence="1">Lysosome-like vacuoles.</text>
</comment>
<comment type="similarity">
    <text evidence="5">Belongs to the peptidase S9B family.</text>
</comment>
<gene>
    <name type="primary">dapB</name>
</gene>
<protein>
    <recommendedName>
        <fullName>Dipeptidyl-aminopeptidase B</fullName>
        <shortName>DPAP B</shortName>
        <ecNumber>3.4.14.5</ecNumber>
    </recommendedName>
</protein>
<dbReference type="EC" id="3.4.14.5"/>
<dbReference type="EMBL" id="AJ278532">
    <property type="protein sequence ID" value="CAC41019.1"/>
    <property type="molecule type" value="Genomic_DNA"/>
</dbReference>
<dbReference type="SMR" id="Q96VT7"/>
<dbReference type="ESTHER" id="aspng-DAPB">
    <property type="family name" value="DPP4N_Peptidase_S9"/>
</dbReference>
<dbReference type="MEROPS" id="S09.006"/>
<dbReference type="GlyCosmos" id="Q96VT7">
    <property type="glycosylation" value="3 sites, No reported glycans"/>
</dbReference>
<dbReference type="PaxDb" id="5061-CADANGAP00002590"/>
<dbReference type="VEuPathDB" id="FungiDB:An02g11420"/>
<dbReference type="VEuPathDB" id="FungiDB:ASPNIDRAFT2_1135973"/>
<dbReference type="VEuPathDB" id="FungiDB:ATCC64974_53600"/>
<dbReference type="VEuPathDB" id="FungiDB:M747DRAFT_255184"/>
<dbReference type="eggNOG" id="KOG2100">
    <property type="taxonomic scope" value="Eukaryota"/>
</dbReference>
<dbReference type="BRENDA" id="3.4.14.5">
    <property type="organism ID" value="518"/>
</dbReference>
<dbReference type="GO" id="GO:0005886">
    <property type="term" value="C:plasma membrane"/>
    <property type="evidence" value="ECO:0007669"/>
    <property type="project" value="TreeGrafter"/>
</dbReference>
<dbReference type="GO" id="GO:0005774">
    <property type="term" value="C:vacuolar membrane"/>
    <property type="evidence" value="ECO:0007669"/>
    <property type="project" value="UniProtKB-SubCell"/>
</dbReference>
<dbReference type="GO" id="GO:0004177">
    <property type="term" value="F:aminopeptidase activity"/>
    <property type="evidence" value="ECO:0007669"/>
    <property type="project" value="UniProtKB-KW"/>
</dbReference>
<dbReference type="GO" id="GO:0008239">
    <property type="term" value="F:dipeptidyl-peptidase activity"/>
    <property type="evidence" value="ECO:0007669"/>
    <property type="project" value="UniProtKB-EC"/>
</dbReference>
<dbReference type="GO" id="GO:0008236">
    <property type="term" value="F:serine-type peptidase activity"/>
    <property type="evidence" value="ECO:0007669"/>
    <property type="project" value="UniProtKB-KW"/>
</dbReference>
<dbReference type="GO" id="GO:0006508">
    <property type="term" value="P:proteolysis"/>
    <property type="evidence" value="ECO:0007669"/>
    <property type="project" value="UniProtKB-KW"/>
</dbReference>
<dbReference type="FunFam" id="3.40.50.1820:FF:000003">
    <property type="entry name" value="Dipeptidyl peptidase 4"/>
    <property type="match status" value="1"/>
</dbReference>
<dbReference type="Gene3D" id="3.40.50.1820">
    <property type="entry name" value="alpha/beta hydrolase"/>
    <property type="match status" value="1"/>
</dbReference>
<dbReference type="Gene3D" id="2.140.10.30">
    <property type="entry name" value="Dipeptidylpeptidase IV, N-terminal domain"/>
    <property type="match status" value="1"/>
</dbReference>
<dbReference type="InterPro" id="IPR029058">
    <property type="entry name" value="AB_hydrolase_fold"/>
</dbReference>
<dbReference type="InterPro" id="IPR001375">
    <property type="entry name" value="Peptidase_S9_cat"/>
</dbReference>
<dbReference type="InterPro" id="IPR002469">
    <property type="entry name" value="Peptidase_S9B_N"/>
</dbReference>
<dbReference type="InterPro" id="IPR050278">
    <property type="entry name" value="Serine_Prot_S9B/DPPIV"/>
</dbReference>
<dbReference type="PANTHER" id="PTHR11731:SF200">
    <property type="entry name" value="DIPEPTIDYL PEPTIDASE 10, ISOFORM B"/>
    <property type="match status" value="1"/>
</dbReference>
<dbReference type="PANTHER" id="PTHR11731">
    <property type="entry name" value="PROTEASE FAMILY S9B,C DIPEPTIDYL-PEPTIDASE IV-RELATED"/>
    <property type="match status" value="1"/>
</dbReference>
<dbReference type="Pfam" id="PF00930">
    <property type="entry name" value="DPPIV_N"/>
    <property type="match status" value="1"/>
</dbReference>
<dbReference type="Pfam" id="PF00326">
    <property type="entry name" value="Peptidase_S9"/>
    <property type="match status" value="1"/>
</dbReference>
<dbReference type="SUPFAM" id="SSF53474">
    <property type="entry name" value="alpha/beta-Hydrolases"/>
    <property type="match status" value="1"/>
</dbReference>
<dbReference type="SUPFAM" id="SSF82171">
    <property type="entry name" value="DPP6 N-terminal domain-like"/>
    <property type="match status" value="1"/>
</dbReference>
<accession>Q96VT7</accession>
<proteinExistence type="inferred from homology"/>
<name>DAPB_ASPNG</name>
<keyword id="KW-0031">Aminopeptidase</keyword>
<keyword id="KW-0325">Glycoprotein</keyword>
<keyword id="KW-0378">Hydrolase</keyword>
<keyword id="KW-0472">Membrane</keyword>
<keyword id="KW-0645">Protease</keyword>
<keyword id="KW-0720">Serine protease</keyword>
<keyword id="KW-0735">Signal-anchor</keyword>
<keyword id="KW-0812">Transmembrane</keyword>
<keyword id="KW-1133">Transmembrane helix</keyword>
<keyword id="KW-0926">Vacuole</keyword>
<reference key="1">
    <citation type="journal article" date="2005" name="Mol. Genet. Genomics">
        <title>Characterisation of the Aspergillus niger dapB gene, which encodes a novel fungal type IV dipeptidyl aminopeptidase.</title>
        <authorList>
            <person name="Jalving R."/>
            <person name="Godefrooij J."/>
            <person name="Veen W.J."/>
            <person name="van Ooyen A.J."/>
            <person name="Schaap P.J."/>
        </authorList>
    </citation>
    <scope>NUCLEOTIDE SEQUENCE [GENOMIC DNA]</scope>
    <scope>FUNCTION</scope>
    <source>
        <strain>ATCC 9029 / NRRL 3 / CBS 120.49 / DSM 2466 / N400 / FGSC 732</strain>
    </source>
</reference>